<proteinExistence type="inferred from homology"/>
<dbReference type="EMBL" id="CP000859">
    <property type="protein sequence ID" value="ABW65896.1"/>
    <property type="molecule type" value="Genomic_DNA"/>
</dbReference>
<dbReference type="RefSeq" id="WP_012173515.1">
    <property type="nucleotide sequence ID" value="NC_009943.1"/>
</dbReference>
<dbReference type="SMR" id="A8ZRX9"/>
<dbReference type="STRING" id="96561.Dole_0086"/>
<dbReference type="KEGG" id="dol:Dole_0086"/>
<dbReference type="eggNOG" id="COG0261">
    <property type="taxonomic scope" value="Bacteria"/>
</dbReference>
<dbReference type="HOGENOM" id="CLU_061463_3_2_7"/>
<dbReference type="OrthoDB" id="9813334at2"/>
<dbReference type="Proteomes" id="UP000008561">
    <property type="component" value="Chromosome"/>
</dbReference>
<dbReference type="GO" id="GO:0005737">
    <property type="term" value="C:cytoplasm"/>
    <property type="evidence" value="ECO:0007669"/>
    <property type="project" value="UniProtKB-ARBA"/>
</dbReference>
<dbReference type="GO" id="GO:1990904">
    <property type="term" value="C:ribonucleoprotein complex"/>
    <property type="evidence" value="ECO:0007669"/>
    <property type="project" value="UniProtKB-KW"/>
</dbReference>
<dbReference type="GO" id="GO:0005840">
    <property type="term" value="C:ribosome"/>
    <property type="evidence" value="ECO:0007669"/>
    <property type="project" value="UniProtKB-KW"/>
</dbReference>
<dbReference type="GO" id="GO:0019843">
    <property type="term" value="F:rRNA binding"/>
    <property type="evidence" value="ECO:0007669"/>
    <property type="project" value="UniProtKB-UniRule"/>
</dbReference>
<dbReference type="GO" id="GO:0003735">
    <property type="term" value="F:structural constituent of ribosome"/>
    <property type="evidence" value="ECO:0007669"/>
    <property type="project" value="InterPro"/>
</dbReference>
<dbReference type="GO" id="GO:0006412">
    <property type="term" value="P:translation"/>
    <property type="evidence" value="ECO:0007669"/>
    <property type="project" value="UniProtKB-UniRule"/>
</dbReference>
<dbReference type="HAMAP" id="MF_01363">
    <property type="entry name" value="Ribosomal_bL21"/>
    <property type="match status" value="1"/>
</dbReference>
<dbReference type="InterPro" id="IPR028909">
    <property type="entry name" value="bL21-like"/>
</dbReference>
<dbReference type="InterPro" id="IPR036164">
    <property type="entry name" value="bL21-like_sf"/>
</dbReference>
<dbReference type="InterPro" id="IPR001787">
    <property type="entry name" value="Ribosomal_bL21"/>
</dbReference>
<dbReference type="InterPro" id="IPR018258">
    <property type="entry name" value="Ribosomal_bL21_CS"/>
</dbReference>
<dbReference type="NCBIfam" id="TIGR00061">
    <property type="entry name" value="L21"/>
    <property type="match status" value="1"/>
</dbReference>
<dbReference type="PANTHER" id="PTHR21349">
    <property type="entry name" value="50S RIBOSOMAL PROTEIN L21"/>
    <property type="match status" value="1"/>
</dbReference>
<dbReference type="PANTHER" id="PTHR21349:SF0">
    <property type="entry name" value="LARGE RIBOSOMAL SUBUNIT PROTEIN BL21M"/>
    <property type="match status" value="1"/>
</dbReference>
<dbReference type="Pfam" id="PF00829">
    <property type="entry name" value="Ribosomal_L21p"/>
    <property type="match status" value="1"/>
</dbReference>
<dbReference type="SUPFAM" id="SSF141091">
    <property type="entry name" value="L21p-like"/>
    <property type="match status" value="1"/>
</dbReference>
<dbReference type="PROSITE" id="PS01169">
    <property type="entry name" value="RIBOSOMAL_L21"/>
    <property type="match status" value="1"/>
</dbReference>
<name>RL21_DESOH</name>
<sequence>MYAVIATGGKQYRVEKDEVLRLEKLPGQVGDTVSFDQILLFSDGESVSVGTPVLGNVTVSGKIVEQDRAKKILVFKTKRRKRYRRKQGHRQSFTAVRIETIQAG</sequence>
<comment type="function">
    <text evidence="1">This protein binds to 23S rRNA in the presence of protein L20.</text>
</comment>
<comment type="subunit">
    <text evidence="1">Part of the 50S ribosomal subunit. Contacts protein L20.</text>
</comment>
<comment type="similarity">
    <text evidence="1">Belongs to the bacterial ribosomal protein bL21 family.</text>
</comment>
<keyword id="KW-1185">Reference proteome</keyword>
<keyword id="KW-0687">Ribonucleoprotein</keyword>
<keyword id="KW-0689">Ribosomal protein</keyword>
<keyword id="KW-0694">RNA-binding</keyword>
<keyword id="KW-0699">rRNA-binding</keyword>
<reference key="1">
    <citation type="submission" date="2007-10" db="EMBL/GenBank/DDBJ databases">
        <title>Complete sequence of Desulfococcus oleovorans Hxd3.</title>
        <authorList>
            <consortium name="US DOE Joint Genome Institute"/>
            <person name="Copeland A."/>
            <person name="Lucas S."/>
            <person name="Lapidus A."/>
            <person name="Barry K."/>
            <person name="Glavina del Rio T."/>
            <person name="Dalin E."/>
            <person name="Tice H."/>
            <person name="Pitluck S."/>
            <person name="Kiss H."/>
            <person name="Brettin T."/>
            <person name="Bruce D."/>
            <person name="Detter J.C."/>
            <person name="Han C."/>
            <person name="Schmutz J."/>
            <person name="Larimer F."/>
            <person name="Land M."/>
            <person name="Hauser L."/>
            <person name="Kyrpides N."/>
            <person name="Kim E."/>
            <person name="Wawrik B."/>
            <person name="Richardson P."/>
        </authorList>
    </citation>
    <scope>NUCLEOTIDE SEQUENCE [LARGE SCALE GENOMIC DNA]</scope>
    <source>
        <strain>DSM 6200 / JCM 39069 / Hxd3</strain>
    </source>
</reference>
<accession>A8ZRX9</accession>
<organism>
    <name type="scientific">Desulfosudis oleivorans (strain DSM 6200 / JCM 39069 / Hxd3)</name>
    <name type="common">Desulfococcus oleovorans</name>
    <dbReference type="NCBI Taxonomy" id="96561"/>
    <lineage>
        <taxon>Bacteria</taxon>
        <taxon>Pseudomonadati</taxon>
        <taxon>Thermodesulfobacteriota</taxon>
        <taxon>Desulfobacteria</taxon>
        <taxon>Desulfobacterales</taxon>
        <taxon>Desulfosudaceae</taxon>
        <taxon>Desulfosudis</taxon>
    </lineage>
</organism>
<protein>
    <recommendedName>
        <fullName evidence="1">Large ribosomal subunit protein bL21</fullName>
    </recommendedName>
    <alternativeName>
        <fullName evidence="2">50S ribosomal protein L21</fullName>
    </alternativeName>
</protein>
<feature type="chain" id="PRO_1000143784" description="Large ribosomal subunit protein bL21">
    <location>
        <begin position="1"/>
        <end position="104"/>
    </location>
</feature>
<gene>
    <name evidence="1" type="primary">rplU</name>
    <name type="ordered locus">Dole_0086</name>
</gene>
<evidence type="ECO:0000255" key="1">
    <source>
        <dbReference type="HAMAP-Rule" id="MF_01363"/>
    </source>
</evidence>
<evidence type="ECO:0000305" key="2"/>